<feature type="chain" id="PRO_0000449958" description="11-beta-hydroxysteroid dehydrogenase A">
    <location>
        <begin position="1"/>
        <end position="348"/>
    </location>
</feature>
<feature type="transmembrane region" description="Helical; Signal-anchor for type II membrane protein" evidence="3">
    <location>
        <begin position="10"/>
        <end position="30"/>
    </location>
</feature>
<feature type="short sequence motif" description="Proline-knob" evidence="13">
    <location>
        <begin position="13"/>
        <end position="26"/>
    </location>
</feature>
<feature type="active site" description="Proton acceptor" evidence="4">
    <location>
        <position position="197"/>
    </location>
</feature>
<feature type="binding site" evidence="1">
    <location>
        <begin position="54"/>
        <end position="80"/>
    </location>
    <ligand>
        <name>NADP(+)</name>
        <dbReference type="ChEBI" id="CHEBI:58349"/>
    </ligand>
</feature>
<feature type="binding site" evidence="1">
    <location>
        <position position="105"/>
    </location>
    <ligand>
        <name>NADP(+)</name>
        <dbReference type="ChEBI" id="CHEBI:58349"/>
    </ligand>
</feature>
<feature type="binding site" evidence="2">
    <location>
        <begin position="132"/>
        <end position="135"/>
    </location>
    <ligand>
        <name>NADP(+)</name>
        <dbReference type="ChEBI" id="CHEBI:58349"/>
    </ligand>
</feature>
<feature type="binding site" evidence="2">
    <location>
        <position position="184"/>
    </location>
    <ligand>
        <name>substrate</name>
    </ligand>
</feature>
<feature type="binding site" evidence="2">
    <location>
        <begin position="197"/>
        <end position="201"/>
    </location>
    <ligand>
        <name>NADP(+)</name>
        <dbReference type="ChEBI" id="CHEBI:58349"/>
    </ligand>
</feature>
<feature type="binding site" evidence="1">
    <location>
        <position position="201"/>
    </location>
    <ligand>
        <name>NADP(+)</name>
        <dbReference type="ChEBI" id="CHEBI:58349"/>
    </ligand>
</feature>
<organism evidence="14">
    <name type="scientific">Sesamum indicum</name>
    <name type="common">Oriental sesame</name>
    <name type="synonym">Sesamum orientale</name>
    <dbReference type="NCBI Taxonomy" id="4182"/>
    <lineage>
        <taxon>Eukaryota</taxon>
        <taxon>Viridiplantae</taxon>
        <taxon>Streptophyta</taxon>
        <taxon>Embryophyta</taxon>
        <taxon>Tracheophyta</taxon>
        <taxon>Spermatophyta</taxon>
        <taxon>Magnoliopsida</taxon>
        <taxon>eudicotyledons</taxon>
        <taxon>Gunneridae</taxon>
        <taxon>Pentapetalae</taxon>
        <taxon>asterids</taxon>
        <taxon>lamiids</taxon>
        <taxon>Lamiales</taxon>
        <taxon>Pedaliaceae</taxon>
        <taxon>Sesamum</taxon>
    </lineage>
</organism>
<protein>
    <recommendedName>
        <fullName evidence="12">11-beta-hydroxysteroid dehydrogenase A</fullName>
        <ecNumber evidence="6 7">1.1.1.-</ecNumber>
    </recommendedName>
    <alternativeName>
        <fullName evidence="12">17-beta-hydroxysteroid dehydrogenase A</fullName>
        <ecNumber evidence="6 7">1.1.1.62</ecNumber>
    </alternativeName>
    <alternativeName>
        <fullName evidence="9 10">Seed oil body protein 2</fullName>
    </alternativeName>
    <alternativeName>
        <fullName evidence="10">Steroleosin-A</fullName>
    </alternativeName>
</protein>
<proteinExistence type="evidence at protein level"/>
<gene>
    <name evidence="9 10 11" type="primary">SOP2</name>
</gene>
<reference evidence="14" key="1">
    <citation type="journal article" date="2002" name="Plant Physiol.">
        <title>Steroleosin, a sterol-binding dehydrogenase in seed oil bodies.</title>
        <authorList>
            <person name="Lin L.J."/>
            <person name="Tai S.S."/>
            <person name="Peng C.C."/>
            <person name="Tzen J.T."/>
        </authorList>
    </citation>
    <scope>NUCLEOTIDE SEQUENCE [GENOMIC DNA / MRNA]</scope>
    <scope>PROTEIN SEQUENCE OF 1-12; 194-204 AND 230-250</scope>
    <scope>FUNCTION</scope>
    <scope>CATALYTIC ACTIVITY</scope>
    <scope>SUBCELLULAR LOCATION</scope>
    <scope>TISSUE SPECIFICITY</scope>
    <scope>DEVELOPMENTAL STAGE</scope>
    <scope>DOMAIN</scope>
    <scope>3D-STRUCTURE MODELING OF THE DEHYDROGENASE DOMAIN</scope>
    <source>
        <tissue evidence="9">Leaf</tissue>
        <tissue evidence="9">Seed</tissue>
    </source>
</reference>
<reference key="2">
    <citation type="journal article" date="2002" name="Plant Physiol.">
        <authorList>
            <person name="Lin L.J."/>
            <person name="Tai S.S."/>
            <person name="Peng C.C."/>
            <person name="Tzen J.T."/>
        </authorList>
    </citation>
    <scope>ERRATUM OF PUBMED:11950969</scope>
</reference>
<reference key="3">
    <citation type="journal article" date="1998" name="Plant Cell Physiol.">
        <title>Identification of three novel unique proteins in seed oil bodies of sesame.</title>
        <authorList>
            <person name="Chen E.C."/>
            <person name="Tai S.S."/>
            <person name="Peng C.C."/>
            <person name="Tzen J.T."/>
        </authorList>
    </citation>
    <scope>GENE NAME</scope>
    <scope>SUBCELLULAR LOCATION</scope>
    <scope>TISSUE SPECIFICITY</scope>
    <scope>DEVELOPMENTAL STAGE</scope>
</reference>
<reference key="4">
    <citation type="journal article" date="2004" name="Plant Physiol. Biochem.">
        <title>Two distinct steroleosins are present in seed oil bodies.</title>
        <authorList>
            <person name="Lin L.J."/>
            <person name="Tzen J.T."/>
        </authorList>
    </citation>
    <scope>FUNCTION</scope>
    <scope>CATALYTIC ACTIVITY</scope>
    <scope>DEVELOPMENTAL STAGE</scope>
</reference>
<name>HSDA_SESIN</name>
<accession>Q93W57</accession>
<comment type="function">
    <text evidence="6 7">Has dehydrogenase activity against corticosterone (11 beta-hydroxysteroid) and estradiol (17 beta-hydroxysteroid), with higher activity against estradiol. Possesses higher dehydrogenase activity with NADP(+) than NAD(+) regardless of the sterol substrate. May be involved in signal transduction regulated by various sterols.</text>
</comment>
<comment type="catalytic activity">
    <reaction evidence="6 7">
        <text>an 11beta-hydroxysteroid + NADP(+) = an 11-oxosteroid + NADPH + H(+)</text>
        <dbReference type="Rhea" id="RHEA:11388"/>
        <dbReference type="ChEBI" id="CHEBI:15378"/>
        <dbReference type="ChEBI" id="CHEBI:35346"/>
        <dbReference type="ChEBI" id="CHEBI:47787"/>
        <dbReference type="ChEBI" id="CHEBI:57783"/>
        <dbReference type="ChEBI" id="CHEBI:58349"/>
    </reaction>
</comment>
<comment type="catalytic activity">
    <reaction evidence="6 7">
        <text>an 11beta-hydroxysteroid + NAD(+) = an 11-oxosteroid + NADH + H(+)</text>
        <dbReference type="Rhea" id="RHEA:53116"/>
        <dbReference type="ChEBI" id="CHEBI:15378"/>
        <dbReference type="ChEBI" id="CHEBI:35346"/>
        <dbReference type="ChEBI" id="CHEBI:47787"/>
        <dbReference type="ChEBI" id="CHEBI:57540"/>
        <dbReference type="ChEBI" id="CHEBI:57945"/>
    </reaction>
</comment>
<comment type="catalytic activity">
    <reaction evidence="6 7">
        <text>corticosterone + NADP(+) = 11-dehydrocorticosterone + NADPH + H(+)</text>
        <dbReference type="Rhea" id="RHEA:42200"/>
        <dbReference type="ChEBI" id="CHEBI:15378"/>
        <dbReference type="ChEBI" id="CHEBI:16827"/>
        <dbReference type="ChEBI" id="CHEBI:57783"/>
        <dbReference type="ChEBI" id="CHEBI:58349"/>
        <dbReference type="ChEBI" id="CHEBI:78600"/>
    </reaction>
</comment>
<comment type="catalytic activity">
    <reaction evidence="6 7">
        <text>corticosterone + NAD(+) = 11-dehydrocorticosterone + NADH + H(+)</text>
        <dbReference type="Rhea" id="RHEA:42204"/>
        <dbReference type="ChEBI" id="CHEBI:15378"/>
        <dbReference type="ChEBI" id="CHEBI:16827"/>
        <dbReference type="ChEBI" id="CHEBI:57540"/>
        <dbReference type="ChEBI" id="CHEBI:57945"/>
        <dbReference type="ChEBI" id="CHEBI:78600"/>
    </reaction>
</comment>
<comment type="catalytic activity">
    <reaction evidence="6 7">
        <text>17beta-estradiol + NADP(+) = estrone + NADPH + H(+)</text>
        <dbReference type="Rhea" id="RHEA:24616"/>
        <dbReference type="ChEBI" id="CHEBI:15378"/>
        <dbReference type="ChEBI" id="CHEBI:16469"/>
        <dbReference type="ChEBI" id="CHEBI:17263"/>
        <dbReference type="ChEBI" id="CHEBI:57783"/>
        <dbReference type="ChEBI" id="CHEBI:58349"/>
        <dbReference type="EC" id="1.1.1.62"/>
    </reaction>
</comment>
<comment type="catalytic activity">
    <reaction evidence="6 7">
        <text>17beta-estradiol + NAD(+) = estrone + NADH + H(+)</text>
        <dbReference type="Rhea" id="RHEA:24612"/>
        <dbReference type="ChEBI" id="CHEBI:15378"/>
        <dbReference type="ChEBI" id="CHEBI:16469"/>
        <dbReference type="ChEBI" id="CHEBI:17263"/>
        <dbReference type="ChEBI" id="CHEBI:57540"/>
        <dbReference type="ChEBI" id="CHEBI:57945"/>
        <dbReference type="EC" id="1.1.1.62"/>
    </reaction>
</comment>
<comment type="subcellular location">
    <subcellularLocation>
        <location evidence="6 8">Lipid droplet</location>
    </subcellularLocation>
    <subcellularLocation>
        <location evidence="3">Membrane</location>
        <topology evidence="12">Single-pass type II membrane protein</topology>
    </subcellularLocation>
    <text evidence="12">Surface of oil bodies. Exists at a monolayer lipid/water interface.</text>
</comment>
<comment type="tissue specificity">
    <text evidence="6 8">Expressed in seeds (at protein level) (PubMed:11950969, PubMed:9816677). Not expressed in stem, leaf or root (at protein level) (PubMed:9816677).</text>
</comment>
<comment type="developmental stage">
    <text evidence="6 7 8">Expressed during seed maturation (PubMed:11950969, PubMed:15331088, PubMed:9816677). Appears in maturing seeds approximately 3 weeks after flowering and thereafter the level is continuously increased till the late stage of seed maturation (at protein level) (PubMed:15331088). Detected in maturing seeds approximately 2 weeks after flowering and expression is maintained at a substantial level thereafter until the late stage of seed maturation (PubMed:11950969).</text>
</comment>
<comment type="domain">
    <text evidence="13">The proline-knob motif may be involved in the targeting to oil bodies.</text>
</comment>
<comment type="similarity">
    <text evidence="5">Belongs to the short-chain dehydrogenases/reductases (SDR) family.</text>
</comment>
<dbReference type="EC" id="1.1.1.-" evidence="6 7"/>
<dbReference type="EC" id="1.1.1.62" evidence="6 7"/>
<dbReference type="EMBL" id="AF302806">
    <property type="protein sequence ID" value="AAL09328.1"/>
    <property type="molecule type" value="mRNA"/>
</dbReference>
<dbReference type="EMBL" id="AF421889">
    <property type="protein sequence ID" value="AAL13315.1"/>
    <property type="molecule type" value="Genomic_DNA"/>
</dbReference>
<dbReference type="RefSeq" id="NP_001291322.1">
    <property type="nucleotide sequence ID" value="NM_001304393.1"/>
</dbReference>
<dbReference type="SMR" id="Q93W57"/>
<dbReference type="FunCoup" id="Q93W57">
    <property type="interactions" value="129"/>
</dbReference>
<dbReference type="GeneID" id="105158152"/>
<dbReference type="KEGG" id="sind:105158152"/>
<dbReference type="InParanoid" id="Q93W57"/>
<dbReference type="OrthoDB" id="47007at2759"/>
<dbReference type="Proteomes" id="UP000504604">
    <property type="component" value="Linkage group LG3"/>
</dbReference>
<dbReference type="GO" id="GO:0005829">
    <property type="term" value="C:cytosol"/>
    <property type="evidence" value="ECO:0007669"/>
    <property type="project" value="TreeGrafter"/>
</dbReference>
<dbReference type="GO" id="GO:0005811">
    <property type="term" value="C:lipid droplet"/>
    <property type="evidence" value="ECO:0007669"/>
    <property type="project" value="UniProtKB-SubCell"/>
</dbReference>
<dbReference type="GO" id="GO:0016020">
    <property type="term" value="C:membrane"/>
    <property type="evidence" value="ECO:0007669"/>
    <property type="project" value="UniProtKB-SubCell"/>
</dbReference>
<dbReference type="GO" id="GO:0070523">
    <property type="term" value="F:11-beta-hydroxysteroid dehydrogenase (NAD+) activity"/>
    <property type="evidence" value="ECO:0007669"/>
    <property type="project" value="RHEA"/>
</dbReference>
<dbReference type="GO" id="GO:0070524">
    <property type="term" value="F:11-beta-hydroxysteroid dehydrogenase (NADP+) activity"/>
    <property type="evidence" value="ECO:0007669"/>
    <property type="project" value="RHEA"/>
</dbReference>
<dbReference type="GO" id="GO:0072582">
    <property type="term" value="F:17-beta-hydroxysteroid dehydrogenase (NADP+) activity"/>
    <property type="evidence" value="ECO:0007669"/>
    <property type="project" value="TreeGrafter"/>
</dbReference>
<dbReference type="GO" id="GO:0004303">
    <property type="term" value="F:estradiol 17-beta-dehydrogenase [NAD(P)+] activity"/>
    <property type="evidence" value="ECO:0007669"/>
    <property type="project" value="UniProtKB-EC"/>
</dbReference>
<dbReference type="GO" id="GO:0008202">
    <property type="term" value="P:steroid metabolic process"/>
    <property type="evidence" value="ECO:0007669"/>
    <property type="project" value="TreeGrafter"/>
</dbReference>
<dbReference type="FunFam" id="3.40.50.720:FF:000084">
    <property type="entry name" value="Short-chain dehydrogenase reductase"/>
    <property type="match status" value="1"/>
</dbReference>
<dbReference type="Gene3D" id="3.40.50.720">
    <property type="entry name" value="NAD(P)-binding Rossmann-like Domain"/>
    <property type="match status" value="1"/>
</dbReference>
<dbReference type="InterPro" id="IPR036291">
    <property type="entry name" value="NAD(P)-bd_dom_sf"/>
</dbReference>
<dbReference type="InterPro" id="IPR020904">
    <property type="entry name" value="Sc_DH/Rdtase_CS"/>
</dbReference>
<dbReference type="InterPro" id="IPR002347">
    <property type="entry name" value="SDR_fam"/>
</dbReference>
<dbReference type="NCBIfam" id="NF004825">
    <property type="entry name" value="PRK06181.1"/>
    <property type="match status" value="1"/>
</dbReference>
<dbReference type="PANTHER" id="PTHR43391:SF89">
    <property type="entry name" value="11-BETA-HYDROXYSTEROID DEHYDROGENASE 1A-RELATED"/>
    <property type="match status" value="1"/>
</dbReference>
<dbReference type="PANTHER" id="PTHR43391">
    <property type="entry name" value="RETINOL DEHYDROGENASE-RELATED"/>
    <property type="match status" value="1"/>
</dbReference>
<dbReference type="Pfam" id="PF00106">
    <property type="entry name" value="adh_short"/>
    <property type="match status" value="1"/>
</dbReference>
<dbReference type="PRINTS" id="PR00081">
    <property type="entry name" value="GDHRDH"/>
</dbReference>
<dbReference type="PRINTS" id="PR00080">
    <property type="entry name" value="SDRFAMILY"/>
</dbReference>
<dbReference type="SMART" id="SM00822">
    <property type="entry name" value="PKS_KR"/>
    <property type="match status" value="1"/>
</dbReference>
<dbReference type="SUPFAM" id="SSF51735">
    <property type="entry name" value="NAD(P)-binding Rossmann-fold domains"/>
    <property type="match status" value="1"/>
</dbReference>
<dbReference type="PROSITE" id="PS00061">
    <property type="entry name" value="ADH_SHORT"/>
    <property type="match status" value="1"/>
</dbReference>
<evidence type="ECO:0000250" key="1">
    <source>
        <dbReference type="UniProtKB" id="P14061"/>
    </source>
</evidence>
<evidence type="ECO:0000250" key="2">
    <source>
        <dbReference type="UniProtKB" id="P28845"/>
    </source>
</evidence>
<evidence type="ECO:0000255" key="3"/>
<evidence type="ECO:0000255" key="4">
    <source>
        <dbReference type="PROSITE-ProRule" id="PRU10001"/>
    </source>
</evidence>
<evidence type="ECO:0000255" key="5">
    <source>
        <dbReference type="RuleBase" id="RU000363"/>
    </source>
</evidence>
<evidence type="ECO:0000269" key="6">
    <source>
    </source>
</evidence>
<evidence type="ECO:0000269" key="7">
    <source>
    </source>
</evidence>
<evidence type="ECO:0000269" key="8">
    <source>
    </source>
</evidence>
<evidence type="ECO:0000303" key="9">
    <source>
    </source>
</evidence>
<evidence type="ECO:0000303" key="10">
    <source>
    </source>
</evidence>
<evidence type="ECO:0000303" key="11">
    <source>
    </source>
</evidence>
<evidence type="ECO:0000305" key="12"/>
<evidence type="ECO:0000305" key="13">
    <source>
    </source>
</evidence>
<evidence type="ECO:0000312" key="14">
    <source>
        <dbReference type="EMBL" id="AAL13315.1"/>
    </source>
</evidence>
<keyword id="KW-0903">Direct protein sequencing</keyword>
<keyword id="KW-0551">Lipid droplet</keyword>
<keyword id="KW-0472">Membrane</keyword>
<keyword id="KW-0521">NADP</keyword>
<keyword id="KW-0560">Oxidoreductase</keyword>
<keyword id="KW-1185">Reference proteome</keyword>
<keyword id="KW-0735">Signal-anchor</keyword>
<keyword id="KW-0812">Transmembrane</keyword>
<keyword id="KW-1133">Transmembrane helix</keyword>
<sequence>MDLIHTFLNLIAPPFTFFFLLFFLPPFQIFKFFLSILGTLFSEDVAGKVVVITGASSGIGESLAYEYAKRGACLVLAARRERSLQEVAERARDLGSPDVVVVRADVSKAEDCRKVVDQTMNRFGRLDHLVNNAGIMSVSMLEEVEDITGYRETMDINFWGYVYMTRFAAPYLRNSRGRIVVLSSSSSWMPTPRMSFYNASKAAISQFFETLRVEFGPDIGITLVTPGFIESELTQGKFYNAGERVIDQDMRDVQVSTTPILRVESAARSIVRSAIRGERYVTEPAWFRVTYWWKLFCPEVMEWVFRLMYLASPGEPEKETFGKKVLDYTGVKSLLYPETVQVPEPKND</sequence>